<sequence>MRRVLRLLLGCFLTELCARMCRAQERSGHGQLAQLGGVLLLTGGNRSGAASGEAGEGVGGSDAPPTRAPTPDSCRGYFDVMGQWDPPFNCSSGDFIFCCGTCGFRFCCTFKKRRLNQSTCTNYDTPLWLNTGKPPARKDDPLHDPTKDKTNLIVYIICGVVAVMVLVGIFTKLGLEKAHRPQREHMSRALADVMRPQGHCNTDHMERDLNIVVHVQHYENMDSRTPINNLHTTQMNNAVPTSPLLQQMGHPHSYPNLGQISNPYEQQPPGKELNKYASLKAVGNSDGDWAVATLKSPKADKVNDDFYAKRRHLAELAVKGNLPLHPVRVEDEPRAFSPEHGPAQQNGQKSRTNKMPPHPLAYNSTANFKTWDPSDQSLRRQAYGNKGKLGIAESGSCDPLGTRTQHFPPTQPYFITNSKTEVTV</sequence>
<organism>
    <name type="scientific">Mus musculus</name>
    <name type="common">Mouse</name>
    <dbReference type="NCBI Taxonomy" id="10090"/>
    <lineage>
        <taxon>Eukaryota</taxon>
        <taxon>Metazoa</taxon>
        <taxon>Chordata</taxon>
        <taxon>Craniata</taxon>
        <taxon>Vertebrata</taxon>
        <taxon>Euteleostomi</taxon>
        <taxon>Mammalia</taxon>
        <taxon>Eutheria</taxon>
        <taxon>Euarchontoglires</taxon>
        <taxon>Glires</taxon>
        <taxon>Rodentia</taxon>
        <taxon>Myomorpha</taxon>
        <taxon>Muroidea</taxon>
        <taxon>Muridae</taxon>
        <taxon>Murinae</taxon>
        <taxon>Mus</taxon>
        <taxon>Mus</taxon>
    </lineage>
</organism>
<protein>
    <recommendedName>
        <fullName>Protein shisa-9</fullName>
    </recommendedName>
    <alternativeName>
        <fullName>Cystine-knot AMPAR modulating protein of 44 kDa</fullName>
        <shortName>CKAMP44</shortName>
    </alternativeName>
</protein>
<gene>
    <name type="primary">Shisa9</name>
</gene>
<dbReference type="EMBL" id="GU479981">
    <property type="protein sequence ID" value="ADD64956.1"/>
    <property type="molecule type" value="mRNA"/>
</dbReference>
<dbReference type="EMBL" id="GU479982">
    <property type="protein sequence ID" value="ADD64957.1"/>
    <property type="molecule type" value="mRNA"/>
</dbReference>
<dbReference type="EMBL" id="AC154289">
    <property type="status" value="NOT_ANNOTATED_CDS"/>
    <property type="molecule type" value="Genomic_DNA"/>
</dbReference>
<dbReference type="EMBL" id="AC129020">
    <property type="status" value="NOT_ANNOTATED_CDS"/>
    <property type="molecule type" value="Genomic_DNA"/>
</dbReference>
<dbReference type="EMBL" id="AK012380">
    <property type="protein sequence ID" value="BAB28201.1"/>
    <property type="status" value="ALT_INIT"/>
    <property type="molecule type" value="mRNA"/>
</dbReference>
<dbReference type="CCDS" id="CCDS49766.1">
    <molecule id="Q9CZN4-1"/>
</dbReference>
<dbReference type="RefSeq" id="NP_082553.2">
    <molecule id="Q9CZN4-1"/>
    <property type="nucleotide sequence ID" value="NM_028277.2"/>
</dbReference>
<dbReference type="SMR" id="Q9CZN4"/>
<dbReference type="BioGRID" id="215434">
    <property type="interactions" value="3"/>
</dbReference>
<dbReference type="FunCoup" id="Q9CZN4">
    <property type="interactions" value="154"/>
</dbReference>
<dbReference type="STRING" id="10090.ENSMUSP00000132646"/>
<dbReference type="GlyCosmos" id="Q9CZN4">
    <property type="glycosylation" value="3 sites, No reported glycans"/>
</dbReference>
<dbReference type="GlyGen" id="Q9CZN4">
    <property type="glycosylation" value="3 sites, 2 N-linked glycans (2 sites)"/>
</dbReference>
<dbReference type="iPTMnet" id="Q9CZN4"/>
<dbReference type="PhosphoSitePlus" id="Q9CZN4"/>
<dbReference type="PaxDb" id="10090-ENSMUSP00000132646"/>
<dbReference type="ProteomicsDB" id="257165">
    <molecule id="Q9CZN4-1"/>
</dbReference>
<dbReference type="ProteomicsDB" id="257166">
    <molecule id="Q9CZN4-2"/>
</dbReference>
<dbReference type="ProteomicsDB" id="257167">
    <molecule id="Q9CZN4-3"/>
</dbReference>
<dbReference type="ProteomicsDB" id="257168">
    <molecule id="Q9CZN4-4"/>
</dbReference>
<dbReference type="Antibodypedia" id="56266">
    <property type="antibodies" value="93 antibodies from 24 providers"/>
</dbReference>
<dbReference type="Ensembl" id="ENSMUST00000170672.9">
    <molecule id="Q9CZN4-1"/>
    <property type="protein sequence ID" value="ENSMUSP00000132646.2"/>
    <property type="gene ID" value="ENSMUSG00000022494.16"/>
</dbReference>
<dbReference type="GeneID" id="72555"/>
<dbReference type="KEGG" id="mmu:72555"/>
<dbReference type="UCSC" id="uc007yfr.1">
    <molecule id="Q9CZN4-2"/>
    <property type="organism name" value="mouse"/>
</dbReference>
<dbReference type="UCSC" id="uc007yfs.2">
    <molecule id="Q9CZN4-1"/>
    <property type="organism name" value="mouse"/>
</dbReference>
<dbReference type="AGR" id="MGI:1919805"/>
<dbReference type="CTD" id="729993"/>
<dbReference type="MGI" id="MGI:1919805">
    <property type="gene designation" value="Shisa9"/>
</dbReference>
<dbReference type="VEuPathDB" id="HostDB:ENSMUSG00000022494"/>
<dbReference type="eggNOG" id="ENOG502QT2A">
    <property type="taxonomic scope" value="Eukaryota"/>
</dbReference>
<dbReference type="GeneTree" id="ENSGT00940000161478"/>
<dbReference type="InParanoid" id="Q9CZN4"/>
<dbReference type="OMA" id="QVIEMTT"/>
<dbReference type="OrthoDB" id="48769at9989"/>
<dbReference type="PhylomeDB" id="Q9CZN4"/>
<dbReference type="TreeFam" id="TF330800"/>
<dbReference type="BioGRID-ORCS" id="72555">
    <property type="hits" value="5 hits in 76 CRISPR screens"/>
</dbReference>
<dbReference type="PRO" id="PR:Q9CZN4"/>
<dbReference type="Proteomes" id="UP000000589">
    <property type="component" value="Chromosome 16"/>
</dbReference>
<dbReference type="RNAct" id="Q9CZN4">
    <property type="molecule type" value="protein"/>
</dbReference>
<dbReference type="Bgee" id="ENSMUSG00000022494">
    <property type="expression patterns" value="Expressed in lumbar subsegment of spinal cord and 109 other cell types or tissues"/>
</dbReference>
<dbReference type="ExpressionAtlas" id="Q9CZN4">
    <property type="expression patterns" value="baseline and differential"/>
</dbReference>
<dbReference type="GO" id="GO:0032281">
    <property type="term" value="C:AMPA glutamate receptor complex"/>
    <property type="evidence" value="ECO:0000314"/>
    <property type="project" value="MGI"/>
</dbReference>
<dbReference type="GO" id="GO:0032591">
    <property type="term" value="C:dendritic spine membrane"/>
    <property type="evidence" value="ECO:0000314"/>
    <property type="project" value="UniProtKB"/>
</dbReference>
<dbReference type="GO" id="GO:0098978">
    <property type="term" value="C:glutamatergic synapse"/>
    <property type="evidence" value="ECO:0000314"/>
    <property type="project" value="SynGO"/>
</dbReference>
<dbReference type="GO" id="GO:0008328">
    <property type="term" value="C:ionotropic glutamate receptor complex"/>
    <property type="evidence" value="ECO:0000314"/>
    <property type="project" value="UniProtKB"/>
</dbReference>
<dbReference type="GO" id="GO:0098839">
    <property type="term" value="C:postsynaptic density membrane"/>
    <property type="evidence" value="ECO:0000314"/>
    <property type="project" value="SynGO"/>
</dbReference>
<dbReference type="GO" id="GO:0045202">
    <property type="term" value="C:synapse"/>
    <property type="evidence" value="ECO:0000314"/>
    <property type="project" value="UniProtKB"/>
</dbReference>
<dbReference type="GO" id="GO:0030165">
    <property type="term" value="F:PDZ domain binding"/>
    <property type="evidence" value="ECO:0000353"/>
    <property type="project" value="MGI"/>
</dbReference>
<dbReference type="GO" id="GO:0048172">
    <property type="term" value="P:regulation of short-term neuronal synaptic plasticity"/>
    <property type="evidence" value="ECO:0000314"/>
    <property type="project" value="UniProtKB"/>
</dbReference>
<dbReference type="InterPro" id="IPR026910">
    <property type="entry name" value="Shisa"/>
</dbReference>
<dbReference type="InterPro" id="IPR053891">
    <property type="entry name" value="Shisa_N"/>
</dbReference>
<dbReference type="PANTHER" id="PTHR31774:SF1">
    <property type="entry name" value="PROTEIN SHISA-9"/>
    <property type="match status" value="1"/>
</dbReference>
<dbReference type="PANTHER" id="PTHR31774">
    <property type="entry name" value="PROTEIN SHISA-9-RELATED"/>
    <property type="match status" value="1"/>
</dbReference>
<dbReference type="Pfam" id="PF13908">
    <property type="entry name" value="Shisa_N"/>
    <property type="match status" value="1"/>
</dbReference>
<proteinExistence type="evidence at protein level"/>
<reference key="1">
    <citation type="journal article" date="2010" name="Science">
        <title>CKAMP44: A brain-specific protein attenuating short-term synaptic plasticity in the dentate gyrus.</title>
        <authorList>
            <person name="von Engelhardt J."/>
            <person name="Mack V."/>
            <person name="Sprengel R."/>
            <person name="Kavenstock N."/>
            <person name="Li K.W."/>
            <person name="Stern-Bach Y."/>
            <person name="Smit A.B."/>
            <person name="Seeburg P.H."/>
            <person name="Monyer H."/>
        </authorList>
    </citation>
    <scope>NUCLEOTIDE SEQUENCE [MRNA] (ISOFORMS 3 AND 4)</scope>
    <scope>FUNCTION</scope>
    <scope>IDENTIFICATION BY MASS SPECTROMETRY</scope>
    <scope>IDENTIFICATION IN A AMPA RECEPTOR COMPLEX</scope>
    <scope>SUBCELLULAR LOCATION</scope>
    <scope>TISSUE SPECIFICITY</scope>
    <scope>DISRUPTION PHENOTYPE</scope>
</reference>
<reference key="2">
    <citation type="journal article" date="2009" name="PLoS Biol.">
        <title>Lineage-specific biology revealed by a finished genome assembly of the mouse.</title>
        <authorList>
            <person name="Church D.M."/>
            <person name="Goodstadt L."/>
            <person name="Hillier L.W."/>
            <person name="Zody M.C."/>
            <person name="Goldstein S."/>
            <person name="She X."/>
            <person name="Bult C.J."/>
            <person name="Agarwala R."/>
            <person name="Cherry J.L."/>
            <person name="DiCuccio M."/>
            <person name="Hlavina W."/>
            <person name="Kapustin Y."/>
            <person name="Meric P."/>
            <person name="Maglott D."/>
            <person name="Birtle Z."/>
            <person name="Marques A.C."/>
            <person name="Graves T."/>
            <person name="Zhou S."/>
            <person name="Teague B."/>
            <person name="Potamousis K."/>
            <person name="Churas C."/>
            <person name="Place M."/>
            <person name="Herschleb J."/>
            <person name="Runnheim R."/>
            <person name="Forrest D."/>
            <person name="Amos-Landgraf J."/>
            <person name="Schwartz D.C."/>
            <person name="Cheng Z."/>
            <person name="Lindblad-Toh K."/>
            <person name="Eichler E.E."/>
            <person name="Ponting C.P."/>
        </authorList>
    </citation>
    <scope>NUCLEOTIDE SEQUENCE [LARGE SCALE GENOMIC DNA]</scope>
    <source>
        <strain>C57BL/6J</strain>
    </source>
</reference>
<reference key="3">
    <citation type="journal article" date="2005" name="Science">
        <title>The transcriptional landscape of the mammalian genome.</title>
        <authorList>
            <person name="Carninci P."/>
            <person name="Kasukawa T."/>
            <person name="Katayama S."/>
            <person name="Gough J."/>
            <person name="Frith M.C."/>
            <person name="Maeda N."/>
            <person name="Oyama R."/>
            <person name="Ravasi T."/>
            <person name="Lenhard B."/>
            <person name="Wells C."/>
            <person name="Kodzius R."/>
            <person name="Shimokawa K."/>
            <person name="Bajic V.B."/>
            <person name="Brenner S.E."/>
            <person name="Batalov S."/>
            <person name="Forrest A.R."/>
            <person name="Zavolan M."/>
            <person name="Davis M.J."/>
            <person name="Wilming L.G."/>
            <person name="Aidinis V."/>
            <person name="Allen J.E."/>
            <person name="Ambesi-Impiombato A."/>
            <person name="Apweiler R."/>
            <person name="Aturaliya R.N."/>
            <person name="Bailey T.L."/>
            <person name="Bansal M."/>
            <person name="Baxter L."/>
            <person name="Beisel K.W."/>
            <person name="Bersano T."/>
            <person name="Bono H."/>
            <person name="Chalk A.M."/>
            <person name="Chiu K.P."/>
            <person name="Choudhary V."/>
            <person name="Christoffels A."/>
            <person name="Clutterbuck D.R."/>
            <person name="Crowe M.L."/>
            <person name="Dalla E."/>
            <person name="Dalrymple B.P."/>
            <person name="de Bono B."/>
            <person name="Della Gatta G."/>
            <person name="di Bernardo D."/>
            <person name="Down T."/>
            <person name="Engstrom P."/>
            <person name="Fagiolini M."/>
            <person name="Faulkner G."/>
            <person name="Fletcher C.F."/>
            <person name="Fukushima T."/>
            <person name="Furuno M."/>
            <person name="Futaki S."/>
            <person name="Gariboldi M."/>
            <person name="Georgii-Hemming P."/>
            <person name="Gingeras T.R."/>
            <person name="Gojobori T."/>
            <person name="Green R.E."/>
            <person name="Gustincich S."/>
            <person name="Harbers M."/>
            <person name="Hayashi Y."/>
            <person name="Hensch T.K."/>
            <person name="Hirokawa N."/>
            <person name="Hill D."/>
            <person name="Huminiecki L."/>
            <person name="Iacono M."/>
            <person name="Ikeo K."/>
            <person name="Iwama A."/>
            <person name="Ishikawa T."/>
            <person name="Jakt M."/>
            <person name="Kanapin A."/>
            <person name="Katoh M."/>
            <person name="Kawasawa Y."/>
            <person name="Kelso J."/>
            <person name="Kitamura H."/>
            <person name="Kitano H."/>
            <person name="Kollias G."/>
            <person name="Krishnan S.P."/>
            <person name="Kruger A."/>
            <person name="Kummerfeld S.K."/>
            <person name="Kurochkin I.V."/>
            <person name="Lareau L.F."/>
            <person name="Lazarevic D."/>
            <person name="Lipovich L."/>
            <person name="Liu J."/>
            <person name="Liuni S."/>
            <person name="McWilliam S."/>
            <person name="Madan Babu M."/>
            <person name="Madera M."/>
            <person name="Marchionni L."/>
            <person name="Matsuda H."/>
            <person name="Matsuzawa S."/>
            <person name="Miki H."/>
            <person name="Mignone F."/>
            <person name="Miyake S."/>
            <person name="Morris K."/>
            <person name="Mottagui-Tabar S."/>
            <person name="Mulder N."/>
            <person name="Nakano N."/>
            <person name="Nakauchi H."/>
            <person name="Ng P."/>
            <person name="Nilsson R."/>
            <person name="Nishiguchi S."/>
            <person name="Nishikawa S."/>
            <person name="Nori F."/>
            <person name="Ohara O."/>
            <person name="Okazaki Y."/>
            <person name="Orlando V."/>
            <person name="Pang K.C."/>
            <person name="Pavan W.J."/>
            <person name="Pavesi G."/>
            <person name="Pesole G."/>
            <person name="Petrovsky N."/>
            <person name="Piazza S."/>
            <person name="Reed J."/>
            <person name="Reid J.F."/>
            <person name="Ring B.Z."/>
            <person name="Ringwald M."/>
            <person name="Rost B."/>
            <person name="Ruan Y."/>
            <person name="Salzberg S.L."/>
            <person name="Sandelin A."/>
            <person name="Schneider C."/>
            <person name="Schoenbach C."/>
            <person name="Sekiguchi K."/>
            <person name="Semple C.A."/>
            <person name="Seno S."/>
            <person name="Sessa L."/>
            <person name="Sheng Y."/>
            <person name="Shibata Y."/>
            <person name="Shimada H."/>
            <person name="Shimada K."/>
            <person name="Silva D."/>
            <person name="Sinclair B."/>
            <person name="Sperling S."/>
            <person name="Stupka E."/>
            <person name="Sugiura K."/>
            <person name="Sultana R."/>
            <person name="Takenaka Y."/>
            <person name="Taki K."/>
            <person name="Tammoja K."/>
            <person name="Tan S.L."/>
            <person name="Tang S."/>
            <person name="Taylor M.S."/>
            <person name="Tegner J."/>
            <person name="Teichmann S.A."/>
            <person name="Ueda H.R."/>
            <person name="van Nimwegen E."/>
            <person name="Verardo R."/>
            <person name="Wei C.L."/>
            <person name="Yagi K."/>
            <person name="Yamanishi H."/>
            <person name="Zabarovsky E."/>
            <person name="Zhu S."/>
            <person name="Zimmer A."/>
            <person name="Hide W."/>
            <person name="Bult C."/>
            <person name="Grimmond S.M."/>
            <person name="Teasdale R.D."/>
            <person name="Liu E.T."/>
            <person name="Brusic V."/>
            <person name="Quackenbush J."/>
            <person name="Wahlestedt C."/>
            <person name="Mattick J.S."/>
            <person name="Hume D.A."/>
            <person name="Kai C."/>
            <person name="Sasaki D."/>
            <person name="Tomaru Y."/>
            <person name="Fukuda S."/>
            <person name="Kanamori-Katayama M."/>
            <person name="Suzuki M."/>
            <person name="Aoki J."/>
            <person name="Arakawa T."/>
            <person name="Iida J."/>
            <person name="Imamura K."/>
            <person name="Itoh M."/>
            <person name="Kato T."/>
            <person name="Kawaji H."/>
            <person name="Kawagashira N."/>
            <person name="Kawashima T."/>
            <person name="Kojima M."/>
            <person name="Kondo S."/>
            <person name="Konno H."/>
            <person name="Nakano K."/>
            <person name="Ninomiya N."/>
            <person name="Nishio T."/>
            <person name="Okada M."/>
            <person name="Plessy C."/>
            <person name="Shibata K."/>
            <person name="Shiraki T."/>
            <person name="Suzuki S."/>
            <person name="Tagami M."/>
            <person name="Waki K."/>
            <person name="Watahiki A."/>
            <person name="Okamura-Oho Y."/>
            <person name="Suzuki H."/>
            <person name="Kawai J."/>
            <person name="Hayashizaki Y."/>
        </authorList>
    </citation>
    <scope>NUCLEOTIDE SEQUENCE [LARGE SCALE MRNA] (ISOFORM 2)</scope>
    <source>
        <strain>C57BL/6J</strain>
    </source>
</reference>
<feature type="signal peptide" evidence="1">
    <location>
        <begin position="1"/>
        <end position="23"/>
    </location>
</feature>
<feature type="chain" id="PRO_0000394254" description="Protein shisa-9">
    <location>
        <begin position="24"/>
        <end position="424"/>
    </location>
</feature>
<feature type="topological domain" description="Extracellular" evidence="1">
    <location>
        <begin position="24"/>
        <end position="149"/>
    </location>
</feature>
<feature type="transmembrane region" description="Helical" evidence="1">
    <location>
        <begin position="150"/>
        <end position="170"/>
    </location>
</feature>
<feature type="topological domain" description="Cytoplasmic" evidence="1">
    <location>
        <begin position="171"/>
        <end position="424"/>
    </location>
</feature>
<feature type="region of interest" description="Disordered" evidence="2">
    <location>
        <begin position="333"/>
        <end position="373"/>
    </location>
</feature>
<feature type="region of interest" description="Disordered" evidence="2">
    <location>
        <begin position="389"/>
        <end position="424"/>
    </location>
</feature>
<feature type="compositionally biased region" description="Polar residues" evidence="2">
    <location>
        <begin position="362"/>
        <end position="373"/>
    </location>
</feature>
<feature type="compositionally biased region" description="Polar residues" evidence="2">
    <location>
        <begin position="402"/>
        <end position="424"/>
    </location>
</feature>
<feature type="glycosylation site" description="N-linked (GlcNAc...) asparagine" evidence="1">
    <location>
        <position position="45"/>
    </location>
</feature>
<feature type="glycosylation site" description="N-linked (GlcNAc...) asparagine" evidence="1">
    <location>
        <position position="89"/>
    </location>
</feature>
<feature type="glycosylation site" description="N-linked (GlcNAc...) asparagine" evidence="1">
    <location>
        <position position="116"/>
    </location>
</feature>
<feature type="splice variant" id="VSP_039229" description="In isoform 2." evidence="4">
    <original>ALADVM</original>
    <variation>RIQRSF</variation>
    <location>
        <begin position="189"/>
        <end position="194"/>
    </location>
</feature>
<feature type="splice variant" id="VSP_039230" description="In isoform 2." evidence="4">
    <location>
        <begin position="195"/>
        <end position="424"/>
    </location>
</feature>
<feature type="splice variant" id="VSP_039231" description="In isoform 3 and isoform 4." evidence="5">
    <location>
        <position position="231"/>
    </location>
</feature>
<feature type="splice variant" id="VSP_039232" description="In isoform 4." evidence="5">
    <location>
        <begin position="283"/>
        <end position="298"/>
    </location>
</feature>
<comment type="function">
    <text evidence="3">Regulator of short-term neuronal synaptic plasticity in the dentate gyrus. Associates with AMPA receptors (ionotropic glutamate receptors) in synaptic spines and promotes AMPA receptor desensitization at excitatory synapses.</text>
</comment>
<comment type="subunit">
    <text evidence="3">Component of some AMPA receptors (ionotropic glutamate receptors) complex, at least composed of some AMPA receptor (GRIA1, GRIA2 and/or GRIA3), CACNG2 and SHISA9, as well as low level of DLG4.</text>
</comment>
<comment type="subcellular location">
    <subcellularLocation>
        <location evidence="3">Cell projection</location>
        <location evidence="3">Dendritic spine membrane</location>
        <topology evidence="3">Single-pass type I membrane protein</topology>
    </subcellularLocation>
    <subcellularLocation>
        <location evidence="3">Synapse</location>
    </subcellularLocation>
</comment>
<comment type="alternative products">
    <event type="alternative splicing"/>
    <isoform>
        <id>Q9CZN4-1</id>
        <name>1</name>
        <sequence type="displayed"/>
    </isoform>
    <isoform>
        <id>Q9CZN4-2</id>
        <name>2</name>
        <sequence type="described" ref="VSP_039229 VSP_039230"/>
    </isoform>
    <isoform>
        <id>Q9CZN4-3</id>
        <name>3</name>
        <name>Ckamp44a</name>
        <sequence type="described" ref="VSP_039231"/>
    </isoform>
    <isoform>
        <id>Q9CZN4-4</id>
        <name>4</name>
        <name>Ckamp44b</name>
        <sequence type="described" ref="VSP_039231 VSP_039232"/>
    </isoform>
</comment>
<comment type="tissue specificity">
    <text evidence="3">Brain-specific. Mainly expressed in neurons, including in hippocampus, cerebral cortex, striatum, thalamus, olfactory bulb and cerebellum. Expressed in most brain structures during embryonic and postnatal development.</text>
</comment>
<comment type="domain">
    <text evidence="3">The extracellular domain contains a pattern of cysteine similar to the snail conotoxin Con-ikot-ikot (AC P0CB20), a toxin known to disrupt AMPA receptors (ionotropic glutamate receptor) desensitization.</text>
</comment>
<comment type="disruption phenotype">
    <text evidence="3">Induces an increase in the paired-pulse ratio of AMPA currents in lateral and medial perforant path-granule cell synapses.</text>
</comment>
<comment type="miscellaneous">
    <molecule>Isoform 2</molecule>
    <text evidence="6">May be produced at very low levels due to a premature stop codon in the mRNA, leading to nonsense-mediated mRNA decay.</text>
</comment>
<comment type="miscellaneous">
    <molecule>Isoform 3</molecule>
    <text evidence="6">Produced by aberrant splicing sites.</text>
</comment>
<comment type="miscellaneous">
    <molecule>Isoform 4</molecule>
    <text evidence="6">Produced by aberrant splicing sites.</text>
</comment>
<comment type="similarity">
    <text evidence="6">Belongs to the shisa family. SHISA9 subfamily.</text>
</comment>
<comment type="sequence caution" evidence="6">
    <conflict type="erroneous initiation">
        <sequence resource="EMBL-CDS" id="BAB28201"/>
    </conflict>
    <text>Extended N-terminus.</text>
</comment>
<evidence type="ECO:0000255" key="1"/>
<evidence type="ECO:0000256" key="2">
    <source>
        <dbReference type="SAM" id="MobiDB-lite"/>
    </source>
</evidence>
<evidence type="ECO:0000269" key="3">
    <source>
    </source>
</evidence>
<evidence type="ECO:0000303" key="4">
    <source>
    </source>
</evidence>
<evidence type="ECO:0000303" key="5">
    <source>
    </source>
</evidence>
<evidence type="ECO:0000305" key="6"/>
<keyword id="KW-0025">Alternative splicing</keyword>
<keyword id="KW-1003">Cell membrane</keyword>
<keyword id="KW-0966">Cell projection</keyword>
<keyword id="KW-0325">Glycoprotein</keyword>
<keyword id="KW-0472">Membrane</keyword>
<keyword id="KW-0628">Postsynaptic cell membrane</keyword>
<keyword id="KW-1185">Reference proteome</keyword>
<keyword id="KW-0732">Signal</keyword>
<keyword id="KW-0770">Synapse</keyword>
<keyword id="KW-0812">Transmembrane</keyword>
<keyword id="KW-1133">Transmembrane helix</keyword>
<name>SHSA9_MOUSE</name>
<accession>Q9CZN4</accession>
<accession>D4NZG2</accession>
<accession>D4NZG3</accession>